<proteinExistence type="evidence at protein level"/>
<keyword id="KW-0002">3D-structure</keyword>
<keyword id="KW-0966">Cell projection</keyword>
<keyword id="KW-0969">Cilium</keyword>
<keyword id="KW-0963">Cytoplasm</keyword>
<keyword id="KW-0206">Cytoskeleton</keyword>
<keyword id="KW-0282">Flagellum</keyword>
<keyword id="KW-1185">Reference proteome</keyword>
<feature type="chain" id="PRO_0000458538" description="Sperm microtubule inner protein 11">
    <location>
        <begin position="1"/>
        <end position="131"/>
    </location>
</feature>
<feature type="region of interest" description="Disordered" evidence="1">
    <location>
        <begin position="17"/>
        <end position="44"/>
    </location>
</feature>
<protein>
    <recommendedName>
        <fullName>Sperm microtubule inner protein 11</fullName>
    </recommendedName>
    <alternativeName>
        <fullName>Testis-expressed protein 49</fullName>
    </alternativeName>
</protein>
<reference key="1">
    <citation type="submission" date="2018-03" db="EMBL/GenBank/DDBJ databases">
        <title>ARS-UCD1.2.</title>
        <authorList>
            <person name="Rosen B.D."/>
            <person name="Bickhart D.M."/>
            <person name="Koren S."/>
            <person name="Schnabel R.D."/>
            <person name="Hall R."/>
            <person name="Zimin A."/>
            <person name="Dreischer C."/>
            <person name="Schultheiss S."/>
            <person name="Schroeder S.G."/>
            <person name="Elsik C.G."/>
            <person name="Couldrey C."/>
            <person name="Liu G.E."/>
            <person name="Van Tassell C.P."/>
            <person name="Phillippy A.M."/>
            <person name="Smith T.P.L."/>
            <person name="Medrano J.F."/>
        </authorList>
    </citation>
    <scope>NUCLEOTIDE SEQUENCE [LARGE SCALE GENOMIC DNA]</scope>
    <source>
        <strain>Hereford</strain>
    </source>
</reference>
<reference evidence="3" key="2">
    <citation type="journal article" date="2023" name="Cell">
        <title>Structural specializations of the sperm tail.</title>
        <authorList>
            <person name="Leung M.R."/>
            <person name="Zeng J."/>
            <person name="Wang X."/>
            <person name="Roelofs M.C."/>
            <person name="Huang W."/>
            <person name="Zenezini Chiozzi R."/>
            <person name="Hevler J.F."/>
            <person name="Heck A.J.R."/>
            <person name="Dutcher S.K."/>
            <person name="Brown A."/>
            <person name="Zhang R."/>
            <person name="Zeev-Ben-Mordehai T."/>
        </authorList>
    </citation>
    <scope>STRUCTURE BY ELECTRON MICROSCOPY (3.60 ANGSTROMS)</scope>
    <scope>FUNCTION</scope>
    <scope>SUBUNIT</scope>
    <scope>SUBCELLULAR LOCATION</scope>
    <scope>TISSUE SPECIFICITY</scope>
</reference>
<gene>
    <name type="primary">SPMIP11</name>
    <name type="synonym">TEX49</name>
</gene>
<name>SMI11_BOVIN</name>
<sequence>MAFFNLHLLGYQNSFRSKKRDKTEETNQKDPVPTRLPPIFSEDGNYSVHQNSHTKYHEAVRKVSLKTFPNQVFRVPLTDAQNFSFWRSNAAGARPEETMPWIQNPRHCLIKSAMTRFMDHSILNDRNFSLY</sequence>
<organism>
    <name type="scientific">Bos taurus</name>
    <name type="common">Bovine</name>
    <dbReference type="NCBI Taxonomy" id="9913"/>
    <lineage>
        <taxon>Eukaryota</taxon>
        <taxon>Metazoa</taxon>
        <taxon>Chordata</taxon>
        <taxon>Craniata</taxon>
        <taxon>Vertebrata</taxon>
        <taxon>Euteleostomi</taxon>
        <taxon>Mammalia</taxon>
        <taxon>Eutheria</taxon>
        <taxon>Laurasiatheria</taxon>
        <taxon>Artiodactyla</taxon>
        <taxon>Ruminantia</taxon>
        <taxon>Pecora</taxon>
        <taxon>Bovidae</taxon>
        <taxon>Bovinae</taxon>
        <taxon>Bos</taxon>
    </lineage>
</organism>
<dbReference type="EMBL" id="NKLS02000005">
    <property type="status" value="NOT_ANNOTATED_CDS"/>
    <property type="molecule type" value="Genomic_DNA"/>
</dbReference>
<dbReference type="PDB" id="8OTZ">
    <property type="method" value="EM"/>
    <property type="resolution" value="3.60 A"/>
    <property type="chains" value="Dm=1-131"/>
</dbReference>
<dbReference type="PDBsum" id="8OTZ"/>
<dbReference type="EMDB" id="EMD-17187"/>
<dbReference type="EMDB" id="EMD-50664"/>
<dbReference type="SMR" id="A0A3Q1MT14"/>
<dbReference type="FunCoup" id="A0A3Q1MT14">
    <property type="interactions" value="1"/>
</dbReference>
<dbReference type="Ensembl" id="ENSBTAT00000069651.1">
    <property type="protein sequence ID" value="ENSBTAP00000073316.1"/>
    <property type="gene ID" value="ENSBTAG00000054993.2"/>
</dbReference>
<dbReference type="VEuPathDB" id="HostDB:ENSBTAG00000054993"/>
<dbReference type="VGNC" id="VGNC:106974">
    <property type="gene designation" value="SPMIP11"/>
</dbReference>
<dbReference type="GeneTree" id="ENSGT00390000010327"/>
<dbReference type="OMA" id="DHCILND"/>
<dbReference type="Proteomes" id="UP000009136">
    <property type="component" value="Chromosome 5"/>
</dbReference>
<dbReference type="Bgee" id="ENSBTAG00000054993">
    <property type="expression patterns" value="Expressed in semen and 64 other cell types or tissues"/>
</dbReference>
<dbReference type="GO" id="GO:0160111">
    <property type="term" value="C:axonemal A tubule inner sheath"/>
    <property type="evidence" value="ECO:0000318"/>
    <property type="project" value="GO_Central"/>
</dbReference>
<dbReference type="GO" id="GO:0036126">
    <property type="term" value="C:sperm flagellum"/>
    <property type="evidence" value="ECO:0007669"/>
    <property type="project" value="Ensembl"/>
</dbReference>
<dbReference type="GO" id="GO:0030317">
    <property type="term" value="P:flagellated sperm motility"/>
    <property type="evidence" value="ECO:0007669"/>
    <property type="project" value="Ensembl"/>
</dbReference>
<dbReference type="InterPro" id="IPR038775">
    <property type="entry name" value="SPMIP11"/>
</dbReference>
<dbReference type="PANTHER" id="PTHR35263">
    <property type="entry name" value="TESTIS-EXPRESSED PROTEIN 49"/>
    <property type="match status" value="1"/>
</dbReference>
<dbReference type="PANTHER" id="PTHR35263:SF1">
    <property type="entry name" value="TESTIS-EXPRESSED PROTEIN 49"/>
    <property type="match status" value="1"/>
</dbReference>
<dbReference type="Pfam" id="PF22593">
    <property type="entry name" value="SPMIP11"/>
    <property type="match status" value="1"/>
</dbReference>
<evidence type="ECO:0000256" key="1">
    <source>
        <dbReference type="SAM" id="MobiDB-lite"/>
    </source>
</evidence>
<evidence type="ECO:0000269" key="2">
    <source>
    </source>
</evidence>
<evidence type="ECO:0007744" key="3">
    <source>
        <dbReference type="PDB" id="8OTZ"/>
    </source>
</evidence>
<comment type="function">
    <text evidence="2">Microtubule inner protein (MIP) part of the dynein-decorated doublet microtubules (DMTs) in flagellum axoneme (PubMed:37327785). May serve to reinforce and thus stabilize the microtubule structure in the sperm flagella (PubMed:37327785).</text>
</comment>
<comment type="subunit">
    <text evidence="2">Microtubule inner protein component of sperm flagellar doublet microtubules.</text>
</comment>
<comment type="subcellular location">
    <subcellularLocation>
        <location evidence="2">Cytoplasm</location>
        <location evidence="2">Cytoskeleton</location>
        <location evidence="2">Flagellum axoneme</location>
    </subcellularLocation>
    <text evidence="2">Localizes to the A-tubules of DMTs.</text>
</comment>
<comment type="tissue specificity">
    <text evidence="2">Expressed in sperm.</text>
</comment>
<accession>A0A3Q1MT14</accession>